<evidence type="ECO:0000255" key="1">
    <source>
        <dbReference type="HAMAP-Rule" id="MF_00373"/>
    </source>
</evidence>
<evidence type="ECO:0000305" key="2"/>
<proteinExistence type="inferred from homology"/>
<gene>
    <name evidence="1" type="primary">rpmB</name>
    <name type="ordered locus">SMU_120</name>
</gene>
<feature type="chain" id="PRO_0000178562" description="Large ribosomal subunit protein bL28">
    <location>
        <begin position="1"/>
        <end position="62"/>
    </location>
</feature>
<protein>
    <recommendedName>
        <fullName evidence="1">Large ribosomal subunit protein bL28</fullName>
    </recommendedName>
    <alternativeName>
        <fullName evidence="2">50S ribosomal protein L28</fullName>
    </alternativeName>
</protein>
<organism>
    <name type="scientific">Streptococcus mutans serotype c (strain ATCC 700610 / UA159)</name>
    <dbReference type="NCBI Taxonomy" id="210007"/>
    <lineage>
        <taxon>Bacteria</taxon>
        <taxon>Bacillati</taxon>
        <taxon>Bacillota</taxon>
        <taxon>Bacilli</taxon>
        <taxon>Lactobacillales</taxon>
        <taxon>Streptococcaceae</taxon>
        <taxon>Streptococcus</taxon>
    </lineage>
</organism>
<dbReference type="EMBL" id="AE014133">
    <property type="protein sequence ID" value="AAN57901.1"/>
    <property type="molecule type" value="Genomic_DNA"/>
</dbReference>
<dbReference type="RefSeq" id="NP_720595.1">
    <property type="nucleotide sequence ID" value="NC_004350.2"/>
</dbReference>
<dbReference type="RefSeq" id="WP_002263485.1">
    <property type="nucleotide sequence ID" value="NC_004350.2"/>
</dbReference>
<dbReference type="SMR" id="Q8DWE1"/>
<dbReference type="STRING" id="210007.SMU_120"/>
<dbReference type="DNASU" id="1029698"/>
<dbReference type="GeneID" id="93860494"/>
<dbReference type="KEGG" id="smu:SMU_120"/>
<dbReference type="PATRIC" id="fig|210007.7.peg.102"/>
<dbReference type="eggNOG" id="COG0227">
    <property type="taxonomic scope" value="Bacteria"/>
</dbReference>
<dbReference type="HOGENOM" id="CLU_064548_7_1_9"/>
<dbReference type="OrthoDB" id="9805609at2"/>
<dbReference type="PhylomeDB" id="Q8DWE1"/>
<dbReference type="Proteomes" id="UP000002512">
    <property type="component" value="Chromosome"/>
</dbReference>
<dbReference type="GO" id="GO:1990904">
    <property type="term" value="C:ribonucleoprotein complex"/>
    <property type="evidence" value="ECO:0007669"/>
    <property type="project" value="UniProtKB-KW"/>
</dbReference>
<dbReference type="GO" id="GO:0005840">
    <property type="term" value="C:ribosome"/>
    <property type="evidence" value="ECO:0007669"/>
    <property type="project" value="UniProtKB-KW"/>
</dbReference>
<dbReference type="GO" id="GO:0003735">
    <property type="term" value="F:structural constituent of ribosome"/>
    <property type="evidence" value="ECO:0007669"/>
    <property type="project" value="InterPro"/>
</dbReference>
<dbReference type="GO" id="GO:0006412">
    <property type="term" value="P:translation"/>
    <property type="evidence" value="ECO:0007669"/>
    <property type="project" value="UniProtKB-UniRule"/>
</dbReference>
<dbReference type="Gene3D" id="2.30.170.40">
    <property type="entry name" value="Ribosomal protein L28/L24"/>
    <property type="match status" value="1"/>
</dbReference>
<dbReference type="HAMAP" id="MF_00373">
    <property type="entry name" value="Ribosomal_bL28"/>
    <property type="match status" value="1"/>
</dbReference>
<dbReference type="InterPro" id="IPR050096">
    <property type="entry name" value="Bacterial_rp_bL28"/>
</dbReference>
<dbReference type="InterPro" id="IPR026569">
    <property type="entry name" value="Ribosomal_bL28"/>
</dbReference>
<dbReference type="InterPro" id="IPR034704">
    <property type="entry name" value="Ribosomal_bL28/bL31-like_sf"/>
</dbReference>
<dbReference type="InterPro" id="IPR001383">
    <property type="entry name" value="Ribosomal_bL28_bact-type"/>
</dbReference>
<dbReference type="InterPro" id="IPR037147">
    <property type="entry name" value="Ribosomal_bL28_sf"/>
</dbReference>
<dbReference type="NCBIfam" id="TIGR00009">
    <property type="entry name" value="L28"/>
    <property type="match status" value="1"/>
</dbReference>
<dbReference type="PANTHER" id="PTHR39080">
    <property type="entry name" value="50S RIBOSOMAL PROTEIN L28"/>
    <property type="match status" value="1"/>
</dbReference>
<dbReference type="PANTHER" id="PTHR39080:SF1">
    <property type="entry name" value="LARGE RIBOSOMAL SUBUNIT PROTEIN BL28A"/>
    <property type="match status" value="1"/>
</dbReference>
<dbReference type="Pfam" id="PF00830">
    <property type="entry name" value="Ribosomal_L28"/>
    <property type="match status" value="1"/>
</dbReference>
<dbReference type="SUPFAM" id="SSF143800">
    <property type="entry name" value="L28p-like"/>
    <property type="match status" value="1"/>
</dbReference>
<comment type="similarity">
    <text evidence="1">Belongs to the bacterial ribosomal protein bL28 family.</text>
</comment>
<name>RL28_STRMU</name>
<sequence>MAKVCYFTGRKTVSANNRSHAMNKTKRVAKPNLQKVTVLIDGKPKKVWASARALKSGKVERV</sequence>
<reference key="1">
    <citation type="journal article" date="2002" name="Proc. Natl. Acad. Sci. U.S.A.">
        <title>Genome sequence of Streptococcus mutans UA159, a cariogenic dental pathogen.</title>
        <authorList>
            <person name="Ajdic D.J."/>
            <person name="McShan W.M."/>
            <person name="McLaughlin R.E."/>
            <person name="Savic G."/>
            <person name="Chang J."/>
            <person name="Carson M.B."/>
            <person name="Primeaux C."/>
            <person name="Tian R."/>
            <person name="Kenton S."/>
            <person name="Jia H.G."/>
            <person name="Lin S.P."/>
            <person name="Qian Y."/>
            <person name="Li S."/>
            <person name="Zhu H."/>
            <person name="Najar F.Z."/>
            <person name="Lai H."/>
            <person name="White J."/>
            <person name="Roe B.A."/>
            <person name="Ferretti J.J."/>
        </authorList>
    </citation>
    <scope>NUCLEOTIDE SEQUENCE [LARGE SCALE GENOMIC DNA]</scope>
    <source>
        <strain>ATCC 700610 / UA159</strain>
    </source>
</reference>
<keyword id="KW-1185">Reference proteome</keyword>
<keyword id="KW-0687">Ribonucleoprotein</keyword>
<keyword id="KW-0689">Ribosomal protein</keyword>
<accession>Q8DWE1</accession>